<keyword id="KW-0143">Chaperone</keyword>
<keyword id="KW-0963">Cytoplasm</keyword>
<keyword id="KW-0996">Nickel insertion</keyword>
<organism>
    <name type="scientific">Actinobacillus pleuropneumoniae serotype 3 (strain JL03)</name>
    <dbReference type="NCBI Taxonomy" id="434271"/>
    <lineage>
        <taxon>Bacteria</taxon>
        <taxon>Pseudomonadati</taxon>
        <taxon>Pseudomonadota</taxon>
        <taxon>Gammaproteobacteria</taxon>
        <taxon>Pasteurellales</taxon>
        <taxon>Pasteurellaceae</taxon>
        <taxon>Actinobacillus</taxon>
    </lineage>
</organism>
<proteinExistence type="inferred from homology"/>
<evidence type="ECO:0000255" key="1">
    <source>
        <dbReference type="HAMAP-Rule" id="MF_01385"/>
    </source>
</evidence>
<protein>
    <recommendedName>
        <fullName evidence="1">Urease accessory protein UreF</fullName>
    </recommendedName>
</protein>
<feature type="chain" id="PRO_1000145108" description="Urease accessory protein UreF">
    <location>
        <begin position="1"/>
        <end position="227"/>
    </location>
</feature>
<dbReference type="EMBL" id="CP000687">
    <property type="protein sequence ID" value="ABY70198.1"/>
    <property type="molecule type" value="Genomic_DNA"/>
</dbReference>
<dbReference type="SMR" id="B0BRT9"/>
<dbReference type="KEGG" id="apj:APJL_1646"/>
<dbReference type="HOGENOM" id="CLU_049215_4_2_6"/>
<dbReference type="Proteomes" id="UP000008547">
    <property type="component" value="Chromosome"/>
</dbReference>
<dbReference type="GO" id="GO:0005737">
    <property type="term" value="C:cytoplasm"/>
    <property type="evidence" value="ECO:0007669"/>
    <property type="project" value="UniProtKB-SubCell"/>
</dbReference>
<dbReference type="GO" id="GO:0016151">
    <property type="term" value="F:nickel cation binding"/>
    <property type="evidence" value="ECO:0007669"/>
    <property type="project" value="UniProtKB-UniRule"/>
</dbReference>
<dbReference type="Gene3D" id="1.10.4190.10">
    <property type="entry name" value="Urease accessory protein UreF"/>
    <property type="match status" value="1"/>
</dbReference>
<dbReference type="HAMAP" id="MF_01385">
    <property type="entry name" value="UreF"/>
    <property type="match status" value="1"/>
</dbReference>
<dbReference type="InterPro" id="IPR002639">
    <property type="entry name" value="UreF"/>
</dbReference>
<dbReference type="InterPro" id="IPR038277">
    <property type="entry name" value="UreF_sf"/>
</dbReference>
<dbReference type="PANTHER" id="PTHR33620">
    <property type="entry name" value="UREASE ACCESSORY PROTEIN F"/>
    <property type="match status" value="1"/>
</dbReference>
<dbReference type="PANTHER" id="PTHR33620:SF1">
    <property type="entry name" value="UREASE ACCESSORY PROTEIN F"/>
    <property type="match status" value="1"/>
</dbReference>
<dbReference type="Pfam" id="PF01730">
    <property type="entry name" value="UreF"/>
    <property type="match status" value="1"/>
</dbReference>
<dbReference type="PIRSF" id="PIRSF009467">
    <property type="entry name" value="Ureas_acces_UreF"/>
    <property type="match status" value="1"/>
</dbReference>
<comment type="function">
    <text evidence="1">Required for maturation of urease via the functional incorporation of the urease nickel metallocenter.</text>
</comment>
<comment type="subunit">
    <text evidence="1">UreD, UreF and UreG form a complex that acts as a GTP-hydrolysis-dependent molecular chaperone, activating the urease apoprotein by helping to assemble the nickel containing metallocenter of UreC. The UreE protein probably delivers the nickel.</text>
</comment>
<comment type="subcellular location">
    <subcellularLocation>
        <location evidence="1">Cytoplasm</location>
    </subcellularLocation>
</comment>
<comment type="similarity">
    <text evidence="1">Belongs to the UreF family.</text>
</comment>
<sequence>MGQLGALLHLVDPTLPIGGFNHSNGLETFVQQGKVNSRASLEEYVQTQLMQNWIYNDGAYLSLAFDAMANHDLGRLLQLDQELAASKIARESREGSYKLGVRLLKIFIRYENHPLLSEFQQAVSEKRCQGYFPIVFAMVAQAMNLDKAETLYAFYYNAAVGVVTNGVKLVPLSQMDGQDILFALRTPLAQAVENSLNPDLDWLGAATLASDIRSMQHEQLYTRLYMS</sequence>
<reference key="1">
    <citation type="journal article" date="2008" name="PLoS ONE">
        <title>Genome biology of Actinobacillus pleuropneumoniae JL03, an isolate of serotype 3 prevalent in China.</title>
        <authorList>
            <person name="Xu Z."/>
            <person name="Zhou Y."/>
            <person name="Li L."/>
            <person name="Zhou R."/>
            <person name="Xiao S."/>
            <person name="Wan Y."/>
            <person name="Zhang S."/>
            <person name="Wang K."/>
            <person name="Li W."/>
            <person name="Li L."/>
            <person name="Jin H."/>
            <person name="Kang M."/>
            <person name="Dalai B."/>
            <person name="Li T."/>
            <person name="Liu L."/>
            <person name="Cheng Y."/>
            <person name="Zhang L."/>
            <person name="Xu T."/>
            <person name="Zheng H."/>
            <person name="Pu S."/>
            <person name="Wang B."/>
            <person name="Gu W."/>
            <person name="Zhang X.L."/>
            <person name="Zhu G.-F."/>
            <person name="Wang S."/>
            <person name="Zhao G.-P."/>
            <person name="Chen H."/>
        </authorList>
    </citation>
    <scope>NUCLEOTIDE SEQUENCE [LARGE SCALE GENOMIC DNA]</scope>
    <source>
        <strain>JL03</strain>
    </source>
</reference>
<accession>B0BRT9</accession>
<gene>
    <name evidence="1" type="primary">ureF</name>
    <name type="ordered locus">APJL_1646</name>
</gene>
<name>UREF_ACTPJ</name>